<accession>Q5H124</accession>
<proteinExistence type="inferred from homology"/>
<feature type="chain" id="PRO_0000231891" description="Serine O-succinyltransferase">
    <location>
        <begin position="1"/>
        <end position="399"/>
    </location>
</feature>
<feature type="domain" description="AB hydrolase-1" evidence="1">
    <location>
        <begin position="45"/>
        <end position="384"/>
    </location>
</feature>
<feature type="region of interest" description="Important for substrate specificity" evidence="1">
    <location>
        <begin position="52"/>
        <end position="55"/>
    </location>
</feature>
<feature type="active site" description="Nucleophile" evidence="1">
    <location>
        <position position="149"/>
    </location>
</feature>
<feature type="active site" evidence="1">
    <location>
        <position position="345"/>
    </location>
</feature>
<feature type="active site" evidence="1">
    <location>
        <position position="378"/>
    </location>
</feature>
<feature type="binding site" evidence="1">
    <location>
        <position position="218"/>
    </location>
    <ligand>
        <name>substrate</name>
    </ligand>
</feature>
<feature type="binding site" evidence="1">
    <location>
        <position position="379"/>
    </location>
    <ligand>
        <name>substrate</name>
    </ligand>
</feature>
<feature type="site" description="Important for acyl-CoA specificity" evidence="1">
    <location>
        <position position="186"/>
    </location>
</feature>
<comment type="function">
    <text evidence="1">Transfers a succinyl group from succinyl-CoA to L-serine, forming succinyl-L-serine.</text>
</comment>
<comment type="catalytic activity">
    <reaction evidence="1">
        <text>succinyl-CoA + L-serine = O-succinyl-L-serine + CoA</text>
        <dbReference type="Rhea" id="RHEA:52820"/>
        <dbReference type="ChEBI" id="CHEBI:33384"/>
        <dbReference type="ChEBI" id="CHEBI:57287"/>
        <dbReference type="ChEBI" id="CHEBI:57292"/>
        <dbReference type="ChEBI" id="CHEBI:136856"/>
    </reaction>
</comment>
<comment type="pathway">
    <text evidence="1">Amino-acid biosynthesis; L-cysteine biosynthesis; L-cysteine from L-serine: step 1/2.</text>
</comment>
<comment type="subunit">
    <text evidence="1">Homodimer.</text>
</comment>
<comment type="subcellular location">
    <subcellularLocation>
        <location evidence="1">Cytoplasm</location>
    </subcellularLocation>
</comment>
<comment type="similarity">
    <text evidence="1">Belongs to the AB hydrolase superfamily. MetX family.</text>
</comment>
<dbReference type="EC" id="2.3.1.-" evidence="1"/>
<dbReference type="EMBL" id="AE013598">
    <property type="protein sequence ID" value="AAW75347.1"/>
    <property type="molecule type" value="Genomic_DNA"/>
</dbReference>
<dbReference type="SMR" id="Q5H124"/>
<dbReference type="STRING" id="291331.XOO2093"/>
<dbReference type="ESTHER" id="xanor-metx">
    <property type="family name" value="Homoserine_transacetylase"/>
</dbReference>
<dbReference type="KEGG" id="xoo:XOO2093"/>
<dbReference type="HOGENOM" id="CLU_028760_1_2_6"/>
<dbReference type="UniPathway" id="UPA00136">
    <property type="reaction ID" value="UER00199"/>
</dbReference>
<dbReference type="Proteomes" id="UP000006735">
    <property type="component" value="Chromosome"/>
</dbReference>
<dbReference type="GO" id="GO:0005737">
    <property type="term" value="C:cytoplasm"/>
    <property type="evidence" value="ECO:0007669"/>
    <property type="project" value="UniProtKB-SubCell"/>
</dbReference>
<dbReference type="GO" id="GO:0004414">
    <property type="term" value="F:homoserine O-acetyltransferase activity"/>
    <property type="evidence" value="ECO:0007669"/>
    <property type="project" value="TreeGrafter"/>
</dbReference>
<dbReference type="GO" id="GO:0160210">
    <property type="term" value="F:L-serine O-succinyltransferase activity"/>
    <property type="evidence" value="ECO:0007669"/>
    <property type="project" value="RHEA"/>
</dbReference>
<dbReference type="GO" id="GO:0006535">
    <property type="term" value="P:cysteine biosynthetic process from serine"/>
    <property type="evidence" value="ECO:0007669"/>
    <property type="project" value="UniProtKB-UniRule"/>
</dbReference>
<dbReference type="GO" id="GO:0009092">
    <property type="term" value="P:homoserine metabolic process"/>
    <property type="evidence" value="ECO:0007669"/>
    <property type="project" value="TreeGrafter"/>
</dbReference>
<dbReference type="GO" id="GO:0009086">
    <property type="term" value="P:methionine biosynthetic process"/>
    <property type="evidence" value="ECO:0007669"/>
    <property type="project" value="TreeGrafter"/>
</dbReference>
<dbReference type="Gene3D" id="3.40.50.1820">
    <property type="entry name" value="alpha/beta hydrolase"/>
    <property type="match status" value="1"/>
</dbReference>
<dbReference type="HAMAP" id="MF_00296">
    <property type="entry name" value="MetX_acyltransf"/>
    <property type="match status" value="1"/>
</dbReference>
<dbReference type="InterPro" id="IPR000073">
    <property type="entry name" value="AB_hydrolase_1"/>
</dbReference>
<dbReference type="InterPro" id="IPR029058">
    <property type="entry name" value="AB_hydrolase_fold"/>
</dbReference>
<dbReference type="InterPro" id="IPR008220">
    <property type="entry name" value="HAT_MetX-like"/>
</dbReference>
<dbReference type="NCBIfam" id="TIGR01392">
    <property type="entry name" value="homoserO_Ac_trn"/>
    <property type="match status" value="1"/>
</dbReference>
<dbReference type="NCBIfam" id="NF001209">
    <property type="entry name" value="PRK00175.1"/>
    <property type="match status" value="1"/>
</dbReference>
<dbReference type="PANTHER" id="PTHR32268">
    <property type="entry name" value="HOMOSERINE O-ACETYLTRANSFERASE"/>
    <property type="match status" value="1"/>
</dbReference>
<dbReference type="PANTHER" id="PTHR32268:SF11">
    <property type="entry name" value="HOMOSERINE O-ACETYLTRANSFERASE"/>
    <property type="match status" value="1"/>
</dbReference>
<dbReference type="Pfam" id="PF00561">
    <property type="entry name" value="Abhydrolase_1"/>
    <property type="match status" value="1"/>
</dbReference>
<dbReference type="PIRSF" id="PIRSF000443">
    <property type="entry name" value="Homoser_Ac_trans"/>
    <property type="match status" value="1"/>
</dbReference>
<dbReference type="SUPFAM" id="SSF53474">
    <property type="entry name" value="alpha/beta-Hydrolases"/>
    <property type="match status" value="1"/>
</dbReference>
<keyword id="KW-0012">Acyltransferase</keyword>
<keyword id="KW-0028">Amino-acid biosynthesis</keyword>
<keyword id="KW-0198">Cysteine biosynthesis</keyword>
<keyword id="KW-0963">Cytoplasm</keyword>
<keyword id="KW-1185">Reference proteome</keyword>
<keyword id="KW-0808">Transferase</keyword>
<evidence type="ECO:0000255" key="1">
    <source>
        <dbReference type="HAMAP-Rule" id="MF_00296"/>
    </source>
</evidence>
<reference key="1">
    <citation type="journal article" date="2005" name="Nucleic Acids Res.">
        <title>The genome sequence of Xanthomonas oryzae pathovar oryzae KACC10331, the bacterial blight pathogen of rice.</title>
        <authorList>
            <person name="Lee B.-M."/>
            <person name="Park Y.-J."/>
            <person name="Park D.-S."/>
            <person name="Kang H.-W."/>
            <person name="Kim J.-G."/>
            <person name="Song E.-S."/>
            <person name="Park I.-C."/>
            <person name="Yoon U.-H."/>
            <person name="Hahn J.-H."/>
            <person name="Koo B.-S."/>
            <person name="Lee G.-B."/>
            <person name="Kim H."/>
            <person name="Park H.-S."/>
            <person name="Yoon K.-O."/>
            <person name="Kim J.-H."/>
            <person name="Jung C.-H."/>
            <person name="Koh N.-H."/>
            <person name="Seo J.-S."/>
            <person name="Go S.-J."/>
        </authorList>
    </citation>
    <scope>NUCLEOTIDE SEQUENCE [LARGE SCALE GENOMIC DNA]</scope>
    <source>
        <strain>KACC10331 / KXO85</strain>
    </source>
</reference>
<gene>
    <name type="primary">metX</name>
    <name type="ordered locus">XOO2093</name>
</gene>
<sequence length="399" mass="43044">MTEFIPLGTLYHALPSPFQMKRGGVLHQAHVAYETWGALAADRSNAVLIVTGLSPNAHAAANQANPEPGWWEAMVGPGKPIDTARWFVVCVNSLGSCKGSTGPASVNPATGALYRLTFPDLSIEDVADAAADVVRALGIAQLACLIGNSMGGMTALALLLRHPGIARSHINISGSAQALPFSIAIRSLQREAIRLDPHWNGGHYDDTRYPESGMRMARKLGVITYRSALEWDGRFGRVRLDSEQSEDDPFGLEFQVESYLEGHARRFVRFFDPNCYLYLSRSMDWFDLAEYVDDKPAADMGIDSPGADALPAAKSETGVSTASTVLAGLARIRIARALAIGANTDILFPVQQQEQIADGLRAGDADARFIGLDSPQGHDAFLVDFARFGPAVRDFLQGC</sequence>
<protein>
    <recommendedName>
        <fullName evidence="1">Serine O-succinyltransferase</fullName>
        <shortName evidence="1">SST</shortName>
        <ecNumber evidence="1">2.3.1.-</ecNumber>
    </recommendedName>
</protein>
<name>SST_XANOR</name>
<organism>
    <name type="scientific">Xanthomonas oryzae pv. oryzae (strain KACC10331 / KXO85)</name>
    <dbReference type="NCBI Taxonomy" id="291331"/>
    <lineage>
        <taxon>Bacteria</taxon>
        <taxon>Pseudomonadati</taxon>
        <taxon>Pseudomonadota</taxon>
        <taxon>Gammaproteobacteria</taxon>
        <taxon>Lysobacterales</taxon>
        <taxon>Lysobacteraceae</taxon>
        <taxon>Xanthomonas</taxon>
    </lineage>
</organism>